<name>DEF2B_SINAL</name>
<reference key="1">
    <citation type="journal article" date="1996" name="Int. J. Pept. Protein Res.">
        <title>Purification and mass spectrometry-based sequencing of yellow mustard (Sinapis alba L.) 6 kDa proteins. Identification as antifungal proteins.</title>
        <authorList>
            <person name="Neumann G.M."/>
            <person name="Condron R."/>
            <person name="Polya G.M."/>
        </authorList>
    </citation>
    <scope>PROTEIN SEQUENCE</scope>
    <scope>MASS SPECTROMETRY</scope>
    <source>
        <tissue>Seed</tissue>
    </source>
</reference>
<sequence>QKLCARPSGTWSSGNCRNNNACRNFCIKLEKSRHGSCNIPFPSNKCICYFPC</sequence>
<proteinExistence type="evidence at protein level"/>
<evidence type="ECO:0000250" key="1"/>
<evidence type="ECO:0000269" key="2">
    <source>
    </source>
</evidence>
<evidence type="ECO:0000305" key="3"/>
<protein>
    <recommendedName>
        <fullName>Defensin-like protein 2B</fullName>
    </recommendedName>
    <alternativeName>
        <fullName>Cysteine-rich antifungal protein 2B</fullName>
        <shortName>AFP2B</shortName>
    </alternativeName>
    <alternativeName>
        <fullName>M2B</fullName>
    </alternativeName>
</protein>
<keyword id="KW-0929">Antimicrobial</keyword>
<keyword id="KW-0903">Direct protein sequencing</keyword>
<keyword id="KW-1015">Disulfide bond</keyword>
<keyword id="KW-0295">Fungicide</keyword>
<accession>Q10989</accession>
<organism>
    <name type="scientific">Sinapis alba</name>
    <name type="common">White mustard</name>
    <name type="synonym">Brassica hirta</name>
    <dbReference type="NCBI Taxonomy" id="3728"/>
    <lineage>
        <taxon>Eukaryota</taxon>
        <taxon>Viridiplantae</taxon>
        <taxon>Streptophyta</taxon>
        <taxon>Embryophyta</taxon>
        <taxon>Tracheophyta</taxon>
        <taxon>Spermatophyta</taxon>
        <taxon>Magnoliopsida</taxon>
        <taxon>eudicotyledons</taxon>
        <taxon>Gunneridae</taxon>
        <taxon>Pentapetalae</taxon>
        <taxon>rosids</taxon>
        <taxon>malvids</taxon>
        <taxon>Brassicales</taxon>
        <taxon>Brassicaceae</taxon>
        <taxon>Brassiceae</taxon>
        <taxon>Sinapis</taxon>
    </lineage>
</organism>
<dbReference type="SMR" id="Q10989"/>
<dbReference type="GO" id="GO:0050832">
    <property type="term" value="P:defense response to fungus"/>
    <property type="evidence" value="ECO:0007669"/>
    <property type="project" value="UniProtKB-KW"/>
</dbReference>
<dbReference type="GO" id="GO:0031640">
    <property type="term" value="P:killing of cells of another organism"/>
    <property type="evidence" value="ECO:0007669"/>
    <property type="project" value="UniProtKB-KW"/>
</dbReference>
<dbReference type="Gene3D" id="3.30.30.10">
    <property type="entry name" value="Knottin, scorpion toxin-like"/>
    <property type="match status" value="1"/>
</dbReference>
<dbReference type="InterPro" id="IPR008176">
    <property type="entry name" value="Defensin_plant"/>
</dbReference>
<dbReference type="InterPro" id="IPR003614">
    <property type="entry name" value="Scorpion_toxin-like"/>
</dbReference>
<dbReference type="InterPro" id="IPR036574">
    <property type="entry name" value="Scorpion_toxin-like_sf"/>
</dbReference>
<dbReference type="Pfam" id="PF00304">
    <property type="entry name" value="Gamma-thionin"/>
    <property type="match status" value="1"/>
</dbReference>
<dbReference type="SMART" id="SM00505">
    <property type="entry name" value="Knot1"/>
    <property type="match status" value="1"/>
</dbReference>
<dbReference type="SUPFAM" id="SSF57095">
    <property type="entry name" value="Scorpion toxin-like"/>
    <property type="match status" value="1"/>
</dbReference>
<dbReference type="PROSITE" id="PS00940">
    <property type="entry name" value="GAMMA_THIONIN"/>
    <property type="match status" value="1"/>
</dbReference>
<feature type="chain" id="PRO_0000074245" description="Defensin-like protein 2B">
    <location>
        <begin position="1"/>
        <end position="52"/>
    </location>
</feature>
<feature type="disulfide bond" evidence="1">
    <location>
        <begin position="4"/>
        <end position="52"/>
    </location>
</feature>
<feature type="disulfide bond" evidence="1">
    <location>
        <begin position="16"/>
        <end position="37"/>
    </location>
</feature>
<feature type="disulfide bond" evidence="1">
    <location>
        <begin position="22"/>
        <end position="46"/>
    </location>
</feature>
<feature type="disulfide bond" evidence="1">
    <location>
        <begin position="26"/>
        <end position="48"/>
    </location>
</feature>
<comment type="function">
    <text>Possesses antifungal activity sensitive to inorganic cations.</text>
</comment>
<comment type="subunit">
    <text>Forms oligomers in its native state.</text>
</comment>
<comment type="mass spectrometry"/>
<comment type="similarity">
    <text evidence="3">Belongs to the DEFL family.</text>
</comment>